<protein>
    <recommendedName>
        <fullName evidence="1">UPF0280 protein MmarC5_0355</fullName>
    </recommendedName>
</protein>
<comment type="similarity">
    <text evidence="1">Belongs to the UPF0280 family.</text>
</comment>
<evidence type="ECO:0000255" key="1">
    <source>
        <dbReference type="HAMAP-Rule" id="MF_01079"/>
    </source>
</evidence>
<proteinExistence type="inferred from homology"/>
<name>Y355_METM5</name>
<accession>A4FWU2</accession>
<organism>
    <name type="scientific">Methanococcus maripaludis (strain C5 / ATCC BAA-1333)</name>
    <dbReference type="NCBI Taxonomy" id="402880"/>
    <lineage>
        <taxon>Archaea</taxon>
        <taxon>Methanobacteriati</taxon>
        <taxon>Methanobacteriota</taxon>
        <taxon>Methanomada group</taxon>
        <taxon>Methanococci</taxon>
        <taxon>Methanococcales</taxon>
        <taxon>Methanococcaceae</taxon>
        <taxon>Methanococcus</taxon>
    </lineage>
</organism>
<sequence length="247" mass="26475">MKFFQEQIAIKETNILLKVDNPKFFKMAKNAVINERLNLENYILRNPIFLTSYSPLEVPDNAPKIVKLMAEAGFNADVGPMAAVAGTFSQLIVENLIENDCKNAISENGGDICLKCEMDTTVGLYAGNSSLSGNLGFKLKKEKMKNGYGICTSSGTVGHSVSFGNADSVTVFSKSAIIADAAATSIGNFAVGNAVDAMNNCLEKAETISKIDGVFVCMGEHAGKIGKIPQLIKTDKKEVLGNVFEMV</sequence>
<gene>
    <name type="ordered locus">MmarC5_0355</name>
</gene>
<feature type="chain" id="PRO_0000366703" description="UPF0280 protein MmarC5_0355">
    <location>
        <begin position="1"/>
        <end position="247"/>
    </location>
</feature>
<reference key="1">
    <citation type="submission" date="2007-03" db="EMBL/GenBank/DDBJ databases">
        <title>Complete sequence of chromosome of Methanococcus maripaludis C5.</title>
        <authorList>
            <consortium name="US DOE Joint Genome Institute"/>
            <person name="Copeland A."/>
            <person name="Lucas S."/>
            <person name="Lapidus A."/>
            <person name="Barry K."/>
            <person name="Glavina del Rio T."/>
            <person name="Dalin E."/>
            <person name="Tice H."/>
            <person name="Pitluck S."/>
            <person name="Chertkov O."/>
            <person name="Brettin T."/>
            <person name="Bruce D."/>
            <person name="Han C."/>
            <person name="Detter J.C."/>
            <person name="Schmutz J."/>
            <person name="Larimer F."/>
            <person name="Land M."/>
            <person name="Hauser L."/>
            <person name="Kyrpides N."/>
            <person name="Mikhailova N."/>
            <person name="Sieprawska-Lupa M."/>
            <person name="Whitman W.B."/>
            <person name="Richardson P."/>
        </authorList>
    </citation>
    <scope>NUCLEOTIDE SEQUENCE [LARGE SCALE GENOMIC DNA]</scope>
    <source>
        <strain>C5 / ATCC BAA-1333</strain>
    </source>
</reference>
<dbReference type="EMBL" id="CP000609">
    <property type="protein sequence ID" value="ABO34671.1"/>
    <property type="molecule type" value="Genomic_DNA"/>
</dbReference>
<dbReference type="RefSeq" id="WP_011868126.1">
    <property type="nucleotide sequence ID" value="NC_009135.1"/>
</dbReference>
<dbReference type="SMR" id="A4FWU2"/>
<dbReference type="STRING" id="402880.MmarC5_0355"/>
<dbReference type="GeneID" id="4928067"/>
<dbReference type="KEGG" id="mmq:MmarC5_0355"/>
<dbReference type="eggNOG" id="arCOG04376">
    <property type="taxonomic scope" value="Archaea"/>
</dbReference>
<dbReference type="HOGENOM" id="CLU_074757_0_0_2"/>
<dbReference type="OrthoDB" id="50299at2157"/>
<dbReference type="Proteomes" id="UP000000253">
    <property type="component" value="Chromosome"/>
</dbReference>
<dbReference type="Gene3D" id="3.10.520.10">
    <property type="entry name" value="ApbE-like domains"/>
    <property type="match status" value="1"/>
</dbReference>
<dbReference type="HAMAP" id="MF_01079">
    <property type="entry name" value="UPF0280"/>
    <property type="match status" value="1"/>
</dbReference>
<dbReference type="InterPro" id="IPR003374">
    <property type="entry name" value="ApbE-like_sf"/>
</dbReference>
<dbReference type="InterPro" id="IPR037456">
    <property type="entry name" value="MA1715-like"/>
</dbReference>
<dbReference type="InterPro" id="IPR007183">
    <property type="entry name" value="UPF0280"/>
</dbReference>
<dbReference type="NCBIfam" id="NF003321">
    <property type="entry name" value="PRK04334.1-1"/>
    <property type="match status" value="1"/>
</dbReference>
<dbReference type="PIRSF" id="PIRSF006421">
    <property type="entry name" value="UCP006421"/>
    <property type="match status" value="1"/>
</dbReference>
<dbReference type="SUPFAM" id="SSF143631">
    <property type="entry name" value="ApbE-like"/>
    <property type="match status" value="1"/>
</dbReference>